<name>YOR97_YEAST</name>
<feature type="chain" id="PRO_0000237654" description="Uncharacterized protein YOR097C">
    <location>
        <begin position="1"/>
        <end position="175"/>
    </location>
</feature>
<feature type="transmembrane region" description="Helical" evidence="1">
    <location>
        <begin position="21"/>
        <end position="41"/>
    </location>
</feature>
<feature type="transmembrane region" description="Helical" evidence="1">
    <location>
        <begin position="50"/>
        <end position="70"/>
    </location>
</feature>
<comment type="subcellular location">
    <subcellularLocation>
        <location evidence="3">Membrane</location>
        <topology evidence="3">Multi-pass membrane protein</topology>
    </subcellularLocation>
</comment>
<comment type="miscellaneous">
    <text evidence="2">Present with 1200 molecules/cell in log phase SD medium.</text>
</comment>
<evidence type="ECO:0000255" key="1"/>
<evidence type="ECO:0000269" key="2">
    <source>
    </source>
</evidence>
<evidence type="ECO:0000305" key="3"/>
<accession>Q12274</accession>
<accession>D6W2F8</accession>
<gene>
    <name type="ordered locus">YOR097C</name>
    <name type="ORF">YOR3180c</name>
</gene>
<dbReference type="EMBL" id="X94335">
    <property type="protein sequence ID" value="CAA64019.1"/>
    <property type="molecule type" value="Genomic_DNA"/>
</dbReference>
<dbReference type="EMBL" id="Z75005">
    <property type="protein sequence ID" value="CAA99294.1"/>
    <property type="molecule type" value="Genomic_DNA"/>
</dbReference>
<dbReference type="EMBL" id="AY692718">
    <property type="protein sequence ID" value="AAT92737.1"/>
    <property type="molecule type" value="Genomic_DNA"/>
</dbReference>
<dbReference type="EMBL" id="BK006948">
    <property type="protein sequence ID" value="DAA10874.1"/>
    <property type="molecule type" value="Genomic_DNA"/>
</dbReference>
<dbReference type="PIR" id="S61657">
    <property type="entry name" value="S61657"/>
</dbReference>
<dbReference type="RefSeq" id="NP_014740.1">
    <property type="nucleotide sequence ID" value="NM_001183516.1"/>
</dbReference>
<dbReference type="BioGRID" id="34495">
    <property type="interactions" value="48"/>
</dbReference>
<dbReference type="DIP" id="DIP-4113N"/>
<dbReference type="FunCoup" id="Q12274">
    <property type="interactions" value="23"/>
</dbReference>
<dbReference type="IntAct" id="Q12274">
    <property type="interactions" value="1"/>
</dbReference>
<dbReference type="MINT" id="Q12274"/>
<dbReference type="STRING" id="4932.YOR097C"/>
<dbReference type="PaxDb" id="4932-YOR097C"/>
<dbReference type="PeptideAtlas" id="Q12274"/>
<dbReference type="EnsemblFungi" id="YOR097C_mRNA">
    <property type="protein sequence ID" value="YOR097C"/>
    <property type="gene ID" value="YOR097C"/>
</dbReference>
<dbReference type="GeneID" id="854264"/>
<dbReference type="KEGG" id="sce:YOR097C"/>
<dbReference type="AGR" id="SGD:S000005623"/>
<dbReference type="SGD" id="S000005623">
    <property type="gene designation" value="YOR097C"/>
</dbReference>
<dbReference type="VEuPathDB" id="FungiDB:YOR097C"/>
<dbReference type="HOGENOM" id="CLU_1749394_0_0_1"/>
<dbReference type="InParanoid" id="Q12274"/>
<dbReference type="OMA" id="FINMARH"/>
<dbReference type="OrthoDB" id="4050479at2759"/>
<dbReference type="BioCyc" id="YEAST:G3O-33630-MONOMER"/>
<dbReference type="BioGRID-ORCS" id="854264">
    <property type="hits" value="0 hits in 10 CRISPR screens"/>
</dbReference>
<dbReference type="PRO" id="PR:Q12274"/>
<dbReference type="Proteomes" id="UP000002311">
    <property type="component" value="Chromosome XV"/>
</dbReference>
<dbReference type="RNAct" id="Q12274">
    <property type="molecule type" value="protein"/>
</dbReference>
<dbReference type="GO" id="GO:0016020">
    <property type="term" value="C:membrane"/>
    <property type="evidence" value="ECO:0007669"/>
    <property type="project" value="UniProtKB-SubCell"/>
</dbReference>
<organism>
    <name type="scientific">Saccharomyces cerevisiae (strain ATCC 204508 / S288c)</name>
    <name type="common">Baker's yeast</name>
    <dbReference type="NCBI Taxonomy" id="559292"/>
    <lineage>
        <taxon>Eukaryota</taxon>
        <taxon>Fungi</taxon>
        <taxon>Dikarya</taxon>
        <taxon>Ascomycota</taxon>
        <taxon>Saccharomycotina</taxon>
        <taxon>Saccharomycetes</taxon>
        <taxon>Saccharomycetales</taxon>
        <taxon>Saccharomycetaceae</taxon>
        <taxon>Saccharomyces</taxon>
    </lineage>
</organism>
<protein>
    <recommendedName>
        <fullName>Uncharacterized protein YOR097C</fullName>
    </recommendedName>
</protein>
<proteinExistence type="evidence at protein level"/>
<reference key="1">
    <citation type="journal article" date="1997" name="Yeast">
        <title>DNA sequencing and analysis of 130 kb from yeast chromosome XV.</title>
        <authorList>
            <person name="Voss H."/>
            <person name="Benes V."/>
            <person name="Andrade M.A."/>
            <person name="Valencia A."/>
            <person name="Rechmann S."/>
            <person name="Teodoru C."/>
            <person name="Schwager C."/>
            <person name="Paces V."/>
            <person name="Sander C."/>
            <person name="Ansorge W."/>
        </authorList>
    </citation>
    <scope>NUCLEOTIDE SEQUENCE [GENOMIC DNA]</scope>
    <source>
        <strain>ATCC 96604 / S288c / FY1679</strain>
    </source>
</reference>
<reference key="2">
    <citation type="journal article" date="1997" name="Nature">
        <title>The nucleotide sequence of Saccharomyces cerevisiae chromosome XV.</title>
        <authorList>
            <person name="Dujon B."/>
            <person name="Albermann K."/>
            <person name="Aldea M."/>
            <person name="Alexandraki D."/>
            <person name="Ansorge W."/>
            <person name="Arino J."/>
            <person name="Benes V."/>
            <person name="Bohn C."/>
            <person name="Bolotin-Fukuhara M."/>
            <person name="Bordonne R."/>
            <person name="Boyer J."/>
            <person name="Camasses A."/>
            <person name="Casamayor A."/>
            <person name="Casas C."/>
            <person name="Cheret G."/>
            <person name="Cziepluch C."/>
            <person name="Daignan-Fornier B."/>
            <person name="Dang V.-D."/>
            <person name="de Haan M."/>
            <person name="Delius H."/>
            <person name="Durand P."/>
            <person name="Fairhead C."/>
            <person name="Feldmann H."/>
            <person name="Gaillon L."/>
            <person name="Galisson F."/>
            <person name="Gamo F.-J."/>
            <person name="Gancedo C."/>
            <person name="Goffeau A."/>
            <person name="Goulding S.E."/>
            <person name="Grivell L.A."/>
            <person name="Habbig B."/>
            <person name="Hand N.J."/>
            <person name="Hani J."/>
            <person name="Hattenhorst U."/>
            <person name="Hebling U."/>
            <person name="Hernando Y."/>
            <person name="Herrero E."/>
            <person name="Heumann K."/>
            <person name="Hiesel R."/>
            <person name="Hilger F."/>
            <person name="Hofmann B."/>
            <person name="Hollenberg C.P."/>
            <person name="Hughes B."/>
            <person name="Jauniaux J.-C."/>
            <person name="Kalogeropoulos A."/>
            <person name="Katsoulou C."/>
            <person name="Kordes E."/>
            <person name="Lafuente M.J."/>
            <person name="Landt O."/>
            <person name="Louis E.J."/>
            <person name="Maarse A.C."/>
            <person name="Madania A."/>
            <person name="Mannhaupt G."/>
            <person name="Marck C."/>
            <person name="Martin R.P."/>
            <person name="Mewes H.-W."/>
            <person name="Michaux G."/>
            <person name="Paces V."/>
            <person name="Parle-McDermott A.G."/>
            <person name="Pearson B.M."/>
            <person name="Perrin A."/>
            <person name="Pettersson B."/>
            <person name="Poch O."/>
            <person name="Pohl T.M."/>
            <person name="Poirey R."/>
            <person name="Portetelle D."/>
            <person name="Pujol A."/>
            <person name="Purnelle B."/>
            <person name="Ramezani Rad M."/>
            <person name="Rechmann S."/>
            <person name="Schwager C."/>
            <person name="Schweizer M."/>
            <person name="Sor F."/>
            <person name="Sterky F."/>
            <person name="Tarassov I.A."/>
            <person name="Teodoru C."/>
            <person name="Tettelin H."/>
            <person name="Thierry A."/>
            <person name="Tobiasch E."/>
            <person name="Tzermia M."/>
            <person name="Uhlen M."/>
            <person name="Unseld M."/>
            <person name="Valens M."/>
            <person name="Vandenbol M."/>
            <person name="Vetter I."/>
            <person name="Vlcek C."/>
            <person name="Voet M."/>
            <person name="Volckaert G."/>
            <person name="Voss H."/>
            <person name="Wambutt R."/>
            <person name="Wedler H."/>
            <person name="Wiemann S."/>
            <person name="Winsor B."/>
            <person name="Wolfe K.H."/>
            <person name="Zollner A."/>
            <person name="Zumstein E."/>
            <person name="Kleine K."/>
        </authorList>
    </citation>
    <scope>NUCLEOTIDE SEQUENCE [LARGE SCALE GENOMIC DNA]</scope>
    <source>
        <strain>ATCC 204508 / S288c</strain>
    </source>
</reference>
<reference key="3">
    <citation type="journal article" date="2014" name="G3 (Bethesda)">
        <title>The reference genome sequence of Saccharomyces cerevisiae: Then and now.</title>
        <authorList>
            <person name="Engel S.R."/>
            <person name="Dietrich F.S."/>
            <person name="Fisk D.G."/>
            <person name="Binkley G."/>
            <person name="Balakrishnan R."/>
            <person name="Costanzo M.C."/>
            <person name="Dwight S.S."/>
            <person name="Hitz B.C."/>
            <person name="Karra K."/>
            <person name="Nash R.S."/>
            <person name="Weng S."/>
            <person name="Wong E.D."/>
            <person name="Lloyd P."/>
            <person name="Skrzypek M.S."/>
            <person name="Miyasato S.R."/>
            <person name="Simison M."/>
            <person name="Cherry J.M."/>
        </authorList>
    </citation>
    <scope>GENOME REANNOTATION</scope>
    <source>
        <strain>ATCC 204508 / S288c</strain>
    </source>
</reference>
<reference key="4">
    <citation type="journal article" date="2007" name="Genome Res.">
        <title>Approaching a complete repository of sequence-verified protein-encoding clones for Saccharomyces cerevisiae.</title>
        <authorList>
            <person name="Hu Y."/>
            <person name="Rolfs A."/>
            <person name="Bhullar B."/>
            <person name="Murthy T.V.S."/>
            <person name="Zhu C."/>
            <person name="Berger M.F."/>
            <person name="Camargo A.A."/>
            <person name="Kelley F."/>
            <person name="McCarron S."/>
            <person name="Jepson D."/>
            <person name="Richardson A."/>
            <person name="Raphael J."/>
            <person name="Moreira D."/>
            <person name="Taycher E."/>
            <person name="Zuo D."/>
            <person name="Mohr S."/>
            <person name="Kane M.F."/>
            <person name="Williamson J."/>
            <person name="Simpson A.J.G."/>
            <person name="Bulyk M.L."/>
            <person name="Harlow E."/>
            <person name="Marsischky G."/>
            <person name="Kolodner R.D."/>
            <person name="LaBaer J."/>
        </authorList>
    </citation>
    <scope>NUCLEOTIDE SEQUENCE [GENOMIC DNA]</scope>
    <source>
        <strain>ATCC 204508 / S288c</strain>
    </source>
</reference>
<reference key="5">
    <citation type="journal article" date="2003" name="Nature">
        <title>Global analysis of protein expression in yeast.</title>
        <authorList>
            <person name="Ghaemmaghami S."/>
            <person name="Huh W.-K."/>
            <person name="Bower K."/>
            <person name="Howson R.W."/>
            <person name="Belle A."/>
            <person name="Dephoure N."/>
            <person name="O'Shea E.K."/>
            <person name="Weissman J.S."/>
        </authorList>
    </citation>
    <scope>LEVEL OF PROTEIN EXPRESSION [LARGE SCALE ANALYSIS]</scope>
</reference>
<keyword id="KW-0472">Membrane</keyword>
<keyword id="KW-1185">Reference proteome</keyword>
<keyword id="KW-0812">Transmembrane</keyword>
<keyword id="KW-1133">Transmembrane helix</keyword>
<sequence length="175" mass="19401">MDLKRDWLRWKITIGSGPGSIVLDFPSFLVGCVFTTMMGPILQKLIGKLLVGLITVCKFLVIIGSIVFVIGVASKKYTYDDFKVSIKRSGEPGESHDMRTEPKRTAKTATVPMEKDEGVGSYNYFEIPITKETSTIPYINCDGTSSLRKPPNGPSSVGLSNSNRYENFINMARHK</sequence>